<proteinExistence type="evidence at protein level"/>
<sequence length="402" mass="45085">MEGSDFILVVDSSVEEQVEELAMYLDNLEANTDKNVLALCREYLASENVKEVLNLFLTRLPLLAQAPEKELEPILAVFINLIQESAAFEDHVSKFCQALEQIADQNNNLTPAILSVLSILFNTAVKERQHARLSILTSVVTLTTRYSLFSTLAPNLKYFPDWLKEAGVSVSDHRAFNIFVSKAIQSYDDEQSFAFLLEAVKMDNSTADEAVRELVQRAVNSPKYFFFDDIVTLPPVQQLEQSTLQLLGILSGGMTDDYVSWVAENHAHCQHQKFDEDAIARKMKLLTIASLATQAPNNTLSYGDVAKSLKIDENEVELWIIDVIRAGLVEGRMSQLTKTLSIHRSSYRVFGKHEWVALHEKLAKWGSSLRYMLQVMEQPLSSFTIASSKKGNRDGSAVTASE</sequence>
<evidence type="ECO:0000255" key="1">
    <source>
        <dbReference type="HAMAP-Rule" id="MF_03012"/>
    </source>
</evidence>
<evidence type="ECO:0000255" key="2">
    <source>
        <dbReference type="PROSITE-ProRule" id="PRU01185"/>
    </source>
</evidence>
<evidence type="ECO:0000269" key="3">
    <source>
    </source>
</evidence>
<evidence type="ECO:0000305" key="4"/>
<reference key="1">
    <citation type="submission" date="1998-07" db="EMBL/GenBank/DDBJ databases">
        <title>S. pombe hypothetical protein.</title>
        <authorList>
            <person name="Kawamukai M."/>
        </authorList>
    </citation>
    <scope>NUCLEOTIDE SEQUENCE [MRNA]</scope>
</reference>
<reference key="2">
    <citation type="journal article" date="2002" name="Nature">
        <title>The genome sequence of Schizosaccharomyces pombe.</title>
        <authorList>
            <person name="Wood V."/>
            <person name="Gwilliam R."/>
            <person name="Rajandream M.A."/>
            <person name="Lyne M.H."/>
            <person name="Lyne R."/>
            <person name="Stewart A."/>
            <person name="Sgouros J.G."/>
            <person name="Peat N."/>
            <person name="Hayles J."/>
            <person name="Baker S.G."/>
            <person name="Basham D."/>
            <person name="Bowman S."/>
            <person name="Brooks K."/>
            <person name="Brown D."/>
            <person name="Brown S."/>
            <person name="Chillingworth T."/>
            <person name="Churcher C.M."/>
            <person name="Collins M."/>
            <person name="Connor R."/>
            <person name="Cronin A."/>
            <person name="Davis P."/>
            <person name="Feltwell T."/>
            <person name="Fraser A."/>
            <person name="Gentles S."/>
            <person name="Goble A."/>
            <person name="Hamlin N."/>
            <person name="Harris D.E."/>
            <person name="Hidalgo J."/>
            <person name="Hodgson G."/>
            <person name="Holroyd S."/>
            <person name="Hornsby T."/>
            <person name="Howarth S."/>
            <person name="Huckle E.J."/>
            <person name="Hunt S."/>
            <person name="Jagels K."/>
            <person name="James K.D."/>
            <person name="Jones L."/>
            <person name="Jones M."/>
            <person name="Leather S."/>
            <person name="McDonald S."/>
            <person name="McLean J."/>
            <person name="Mooney P."/>
            <person name="Moule S."/>
            <person name="Mungall K.L."/>
            <person name="Murphy L.D."/>
            <person name="Niblett D."/>
            <person name="Odell C."/>
            <person name="Oliver K."/>
            <person name="O'Neil S."/>
            <person name="Pearson D."/>
            <person name="Quail M.A."/>
            <person name="Rabbinowitsch E."/>
            <person name="Rutherford K.M."/>
            <person name="Rutter S."/>
            <person name="Saunders D."/>
            <person name="Seeger K."/>
            <person name="Sharp S."/>
            <person name="Skelton J."/>
            <person name="Simmonds M.N."/>
            <person name="Squares R."/>
            <person name="Squares S."/>
            <person name="Stevens K."/>
            <person name="Taylor K."/>
            <person name="Taylor R.G."/>
            <person name="Tivey A."/>
            <person name="Walsh S.V."/>
            <person name="Warren T."/>
            <person name="Whitehead S."/>
            <person name="Woodward J.R."/>
            <person name="Volckaert G."/>
            <person name="Aert R."/>
            <person name="Robben J."/>
            <person name="Grymonprez B."/>
            <person name="Weltjens I."/>
            <person name="Vanstreels E."/>
            <person name="Rieger M."/>
            <person name="Schaefer M."/>
            <person name="Mueller-Auer S."/>
            <person name="Gabel C."/>
            <person name="Fuchs M."/>
            <person name="Duesterhoeft A."/>
            <person name="Fritzc C."/>
            <person name="Holzer E."/>
            <person name="Moestl D."/>
            <person name="Hilbert H."/>
            <person name="Borzym K."/>
            <person name="Langer I."/>
            <person name="Beck A."/>
            <person name="Lehrach H."/>
            <person name="Reinhardt R."/>
            <person name="Pohl T.M."/>
            <person name="Eger P."/>
            <person name="Zimmermann W."/>
            <person name="Wedler H."/>
            <person name="Wambutt R."/>
            <person name="Purnelle B."/>
            <person name="Goffeau A."/>
            <person name="Cadieu E."/>
            <person name="Dreano S."/>
            <person name="Gloux S."/>
            <person name="Lelaure V."/>
            <person name="Mottier S."/>
            <person name="Galibert F."/>
            <person name="Aves S.J."/>
            <person name="Xiang Z."/>
            <person name="Hunt C."/>
            <person name="Moore K."/>
            <person name="Hurst S.M."/>
            <person name="Lucas M."/>
            <person name="Rochet M."/>
            <person name="Gaillardin C."/>
            <person name="Tallada V.A."/>
            <person name="Garzon A."/>
            <person name="Thode G."/>
            <person name="Daga R.R."/>
            <person name="Cruzado L."/>
            <person name="Jimenez J."/>
            <person name="Sanchez M."/>
            <person name="del Rey F."/>
            <person name="Benito J."/>
            <person name="Dominguez A."/>
            <person name="Revuelta J.L."/>
            <person name="Moreno S."/>
            <person name="Armstrong J."/>
            <person name="Forsburg S.L."/>
            <person name="Cerutti L."/>
            <person name="Lowe T."/>
            <person name="McCombie W.R."/>
            <person name="Paulsen I."/>
            <person name="Potashkin J."/>
            <person name="Shpakovski G.V."/>
            <person name="Ussery D."/>
            <person name="Barrell B.G."/>
            <person name="Nurse P."/>
        </authorList>
    </citation>
    <scope>NUCLEOTIDE SEQUENCE [LARGE SCALE GENOMIC DNA]</scope>
    <source>
        <strain>972 / ATCC 24843</strain>
    </source>
</reference>
<reference key="3">
    <citation type="journal article" date="2005" name="BMC Biol.">
        <title>PCI proteins eIF3e and eIF3m define distinct translation initiation factor 3 complexes.</title>
        <authorList>
            <person name="Zhou C."/>
            <person name="Arslan F."/>
            <person name="Wee S."/>
            <person name="Krishnan S."/>
            <person name="Ivanov A.R."/>
            <person name="Oliva A."/>
            <person name="Leatherwood J."/>
            <person name="Wolf D.A."/>
        </authorList>
    </citation>
    <scope>FUNCTION</scope>
    <scope>IDENTIFICATION IN THE EIF-3 COMPLEX</scope>
    <scope>IDENTIFICATION BY MASS SPECTROMETRY</scope>
    <scope>SUBCELLULAR LOCATION</scope>
</reference>
<reference key="4">
    <citation type="journal article" date="2007" name="Mol. Cell. Biol.">
        <title>CIF-1, a shared subunit of the COP9/signalosome and eukaryotic initiation factor 3 complexes, regulates MEL-26 levels in the Caenorhabditis elegans embryo.</title>
        <authorList>
            <person name="Luke-Glaser S."/>
            <person name="Roy M."/>
            <person name="Larsen B."/>
            <person name="Le Bihan T."/>
            <person name="Metalnikov P."/>
            <person name="Tyers M."/>
            <person name="Peter M."/>
            <person name="Pintard L."/>
        </authorList>
    </citation>
    <scope>IDENTIFICATION</scope>
</reference>
<feature type="chain" id="PRO_0000121006" description="Eukaryotic translation initiation factor 3 subunit M">
    <location>
        <begin position="1"/>
        <end position="402"/>
    </location>
</feature>
<feature type="domain" description="PCI" evidence="2">
    <location>
        <begin position="188"/>
        <end position="347"/>
    </location>
</feature>
<name>EIF3M_SCHPO</name>
<keyword id="KW-0963">Cytoplasm</keyword>
<keyword id="KW-0396">Initiation factor</keyword>
<keyword id="KW-0648">Protein biosynthesis</keyword>
<keyword id="KW-1185">Reference proteome</keyword>
<dbReference type="EMBL" id="AB016218">
    <property type="protein sequence ID" value="BAA31742.1"/>
    <property type="status" value="ALT_INIT"/>
    <property type="molecule type" value="mRNA"/>
</dbReference>
<dbReference type="EMBL" id="CU329670">
    <property type="protein sequence ID" value="CAB61449.2"/>
    <property type="molecule type" value="Genomic_DNA"/>
</dbReference>
<dbReference type="PIR" id="T43387">
    <property type="entry name" value="T43387"/>
</dbReference>
<dbReference type="PIR" id="T50090">
    <property type="entry name" value="T50090"/>
</dbReference>
<dbReference type="RefSeq" id="NP_592913.2">
    <property type="nucleotide sequence ID" value="NM_001018314.2"/>
</dbReference>
<dbReference type="SMR" id="Q09722"/>
<dbReference type="BioGRID" id="278812">
    <property type="interactions" value="14"/>
</dbReference>
<dbReference type="FunCoup" id="Q09722">
    <property type="interactions" value="742"/>
</dbReference>
<dbReference type="STRING" id="284812.Q09722"/>
<dbReference type="iPTMnet" id="Q09722"/>
<dbReference type="PaxDb" id="4896-SPAC1751.03.1"/>
<dbReference type="EnsemblFungi" id="SPAC1751.03.1">
    <property type="protein sequence ID" value="SPAC1751.03.1:pep"/>
    <property type="gene ID" value="SPAC1751.03"/>
</dbReference>
<dbReference type="GeneID" id="2542347"/>
<dbReference type="KEGG" id="spo:2542347"/>
<dbReference type="PomBase" id="SPAC1751.03"/>
<dbReference type="VEuPathDB" id="FungiDB:SPAC1751.03"/>
<dbReference type="eggNOG" id="KOG2753">
    <property type="taxonomic scope" value="Eukaryota"/>
</dbReference>
<dbReference type="HOGENOM" id="CLU_035254_0_1_1"/>
<dbReference type="InParanoid" id="Q09722"/>
<dbReference type="OMA" id="VCLKALW"/>
<dbReference type="PhylomeDB" id="Q09722"/>
<dbReference type="Reactome" id="R-SPO-156827">
    <property type="pathway name" value="L13a-mediated translational silencing of Ceruloplasmin expression"/>
</dbReference>
<dbReference type="Reactome" id="R-SPO-72649">
    <property type="pathway name" value="Translation initiation complex formation"/>
</dbReference>
<dbReference type="Reactome" id="R-SPO-72689">
    <property type="pathway name" value="Formation of a pool of free 40S subunits"/>
</dbReference>
<dbReference type="Reactome" id="R-SPO-72695">
    <property type="pathway name" value="Formation of the ternary complex, and subsequently, the 43S complex"/>
</dbReference>
<dbReference type="Reactome" id="R-SPO-72702">
    <property type="pathway name" value="Ribosomal scanning and start codon recognition"/>
</dbReference>
<dbReference type="Reactome" id="R-SPO-72706">
    <property type="pathway name" value="GTP hydrolysis and joining of the 60S ribosomal subunit"/>
</dbReference>
<dbReference type="PRO" id="PR:Q09722"/>
<dbReference type="Proteomes" id="UP000002485">
    <property type="component" value="Chromosome I"/>
</dbReference>
<dbReference type="GO" id="GO:0005737">
    <property type="term" value="C:cytoplasm"/>
    <property type="evidence" value="ECO:0000314"/>
    <property type="project" value="PomBase"/>
</dbReference>
<dbReference type="GO" id="GO:0005829">
    <property type="term" value="C:cytosol"/>
    <property type="evidence" value="ECO:0007005"/>
    <property type="project" value="PomBase"/>
</dbReference>
<dbReference type="GO" id="GO:0016282">
    <property type="term" value="C:eukaryotic 43S preinitiation complex"/>
    <property type="evidence" value="ECO:0000314"/>
    <property type="project" value="PomBase"/>
</dbReference>
<dbReference type="GO" id="GO:0033290">
    <property type="term" value="C:eukaryotic 48S preinitiation complex"/>
    <property type="evidence" value="ECO:0007669"/>
    <property type="project" value="UniProtKB-UniRule"/>
</dbReference>
<dbReference type="GO" id="GO:0005852">
    <property type="term" value="C:eukaryotic translation initiation factor 3 complex"/>
    <property type="evidence" value="ECO:0000314"/>
    <property type="project" value="PomBase"/>
</dbReference>
<dbReference type="GO" id="GO:0071541">
    <property type="term" value="C:eukaryotic translation initiation factor 3 complex, eIF3m"/>
    <property type="evidence" value="ECO:0007669"/>
    <property type="project" value="UniProtKB-UniRule"/>
</dbReference>
<dbReference type="GO" id="GO:0003743">
    <property type="term" value="F:translation initiation factor activity"/>
    <property type="evidence" value="ECO:0007669"/>
    <property type="project" value="UniProtKB-UniRule"/>
</dbReference>
<dbReference type="GO" id="GO:0002183">
    <property type="term" value="P:cytoplasmic translational initiation"/>
    <property type="evidence" value="ECO:0000315"/>
    <property type="project" value="PomBase"/>
</dbReference>
<dbReference type="GO" id="GO:0001732">
    <property type="term" value="P:formation of cytoplasmic translation initiation complex"/>
    <property type="evidence" value="ECO:0000305"/>
    <property type="project" value="PomBase"/>
</dbReference>
<dbReference type="HAMAP" id="MF_03012">
    <property type="entry name" value="eIF3m"/>
    <property type="match status" value="1"/>
</dbReference>
<dbReference type="InterPro" id="IPR045237">
    <property type="entry name" value="COPS7/eIF3m"/>
</dbReference>
<dbReference type="InterPro" id="IPR027528">
    <property type="entry name" value="eIF3m"/>
</dbReference>
<dbReference type="InterPro" id="IPR040750">
    <property type="entry name" value="eIF3m_C_helix"/>
</dbReference>
<dbReference type="InterPro" id="IPR000717">
    <property type="entry name" value="PCI_dom"/>
</dbReference>
<dbReference type="PANTHER" id="PTHR15350">
    <property type="entry name" value="COP9 SIGNALOSOME COMPLEX SUBUNIT 7/DENDRITIC CELL PROTEIN GA17"/>
    <property type="match status" value="1"/>
</dbReference>
<dbReference type="PANTHER" id="PTHR15350:SF2">
    <property type="entry name" value="EUKARYOTIC TRANSLATION INITIATION FACTOR 3 SUBUNIT M"/>
    <property type="match status" value="1"/>
</dbReference>
<dbReference type="Pfam" id="PF18005">
    <property type="entry name" value="eIF3m_C_helix"/>
    <property type="match status" value="1"/>
</dbReference>
<dbReference type="Pfam" id="PF01399">
    <property type="entry name" value="PCI"/>
    <property type="match status" value="1"/>
</dbReference>
<dbReference type="SMART" id="SM00088">
    <property type="entry name" value="PINT"/>
    <property type="match status" value="1"/>
</dbReference>
<dbReference type="PROSITE" id="PS50250">
    <property type="entry name" value="PCI"/>
    <property type="match status" value="1"/>
</dbReference>
<accession>Q09722</accession>
<accession>Q9URK6</accession>
<accession>Q9US29</accession>
<comment type="function">
    <text evidence="1 3">Component of the eukaryotic translation initiation factor 3 (eIF-3) complex, which is involved in protein synthesis of a specialized repertoire of mRNAs and, together with other initiation factors, stimulates binding of mRNA and methionyl-tRNAi to the 40S ribosome. The eIF-3 complex specifically targets and initiates translation of a subset of mRNAs involved in cell proliferation.</text>
</comment>
<comment type="subunit">
    <text evidence="1 3">Component of the eukaryotic translation initiation factor 3 (eIF-3) complex. The eIF-3 complex appears to include tif32/eif3a, SPAC25G10.08/eif3b, tif33/eif3c, SPBC4C3.07/eif3f, tif35/eif3g and sum1/eif3i. This set of common subunits may also associate exclusively with either moe1/eif3d and int6/eif3e, or with SPAC821.05/eif3h and SPAC1751.03/eif3m. The eIF-3 complex may also include SPAC3A12.13c/eif3j.</text>
</comment>
<comment type="subcellular location">
    <subcellularLocation>
        <location evidence="1 3">Cytoplasm</location>
    </subcellularLocation>
</comment>
<comment type="similarity">
    <text evidence="1">Belongs to the eIF-3 subunit M family.</text>
</comment>
<comment type="sequence caution" evidence="4">
    <conflict type="erroneous initiation">
        <sequence resource="EMBL-CDS" id="BAA31742"/>
    </conflict>
    <text>Extended N-terminus.</text>
</comment>
<organism>
    <name type="scientific">Schizosaccharomyces pombe (strain 972 / ATCC 24843)</name>
    <name type="common">Fission yeast</name>
    <dbReference type="NCBI Taxonomy" id="284812"/>
    <lineage>
        <taxon>Eukaryota</taxon>
        <taxon>Fungi</taxon>
        <taxon>Dikarya</taxon>
        <taxon>Ascomycota</taxon>
        <taxon>Taphrinomycotina</taxon>
        <taxon>Schizosaccharomycetes</taxon>
        <taxon>Schizosaccharomycetales</taxon>
        <taxon>Schizosaccharomycetaceae</taxon>
        <taxon>Schizosaccharomyces</taxon>
    </lineage>
</organism>
<protein>
    <recommendedName>
        <fullName evidence="1">Eukaryotic translation initiation factor 3 subunit M</fullName>
        <shortName evidence="1">eIF3m</shortName>
    </recommendedName>
</protein>
<gene>
    <name type="primary">eif3m</name>
    <name type="synonym">csn72</name>
    <name type="synonym">csn7b</name>
    <name type="ORF">SPAC1751.03</name>
    <name type="ORF">SPAC31A2.01</name>
</gene>